<organism>
    <name type="scientific">Drosophila melanogaster</name>
    <name type="common">Fruit fly</name>
    <dbReference type="NCBI Taxonomy" id="7227"/>
    <lineage>
        <taxon>Eukaryota</taxon>
        <taxon>Metazoa</taxon>
        <taxon>Ecdysozoa</taxon>
        <taxon>Arthropoda</taxon>
        <taxon>Hexapoda</taxon>
        <taxon>Insecta</taxon>
        <taxon>Pterygota</taxon>
        <taxon>Neoptera</taxon>
        <taxon>Endopterygota</taxon>
        <taxon>Diptera</taxon>
        <taxon>Brachycera</taxon>
        <taxon>Muscomorpha</taxon>
        <taxon>Ephydroidea</taxon>
        <taxon>Drosophilidae</taxon>
        <taxon>Drosophila</taxon>
        <taxon>Sophophora</taxon>
    </lineage>
</organism>
<evidence type="ECO:0000250" key="1"/>
<evidence type="ECO:0000269" key="2">
    <source>
    </source>
</evidence>
<evidence type="ECO:0000269" key="3">
    <source>
    </source>
</evidence>
<evidence type="ECO:0000303" key="4">
    <source>
    </source>
</evidence>
<evidence type="ECO:0000305" key="5"/>
<evidence type="ECO:0000312" key="6">
    <source>
        <dbReference type="FlyBase" id="FBgn0263006"/>
    </source>
</evidence>
<protein>
    <recommendedName>
        <fullName>Calcium-transporting ATPase sarcoplasmic/endoplasmic reticulum type</fullName>
        <ecNumber>7.2.2.10</ecNumber>
    </recommendedName>
    <alternativeName>
        <fullName>Calcium ATPase at 60A</fullName>
    </alternativeName>
    <alternativeName>
        <fullName>Calcium pump</fullName>
    </alternativeName>
    <alternativeName>
        <fullName evidence="6">Sarcoplasmic/endoplasmic reticulum Ca(2+)-ATPase</fullName>
    </alternativeName>
</protein>
<keyword id="KW-0025">Alternative splicing</keyword>
<keyword id="KW-0067">ATP-binding</keyword>
<keyword id="KW-0106">Calcium</keyword>
<keyword id="KW-0109">Calcium transport</keyword>
<keyword id="KW-0256">Endoplasmic reticulum</keyword>
<keyword id="KW-0406">Ion transport</keyword>
<keyword id="KW-0460">Magnesium</keyword>
<keyword id="KW-0472">Membrane</keyword>
<keyword id="KW-0479">Metal-binding</keyword>
<keyword id="KW-0547">Nucleotide-binding</keyword>
<keyword id="KW-0597">Phosphoprotein</keyword>
<keyword id="KW-1185">Reference proteome</keyword>
<keyword id="KW-0703">Sarcoplasmic reticulum</keyword>
<keyword id="KW-1278">Translocase</keyword>
<keyword id="KW-0812">Transmembrane</keyword>
<keyword id="KW-1133">Transmembrane helix</keyword>
<keyword id="KW-0813">Transport</keyword>
<accession>P22700</accession>
<accession>A4UZU0</accession>
<accession>Q2MGN2</accession>
<accession>Q95TX1</accession>
<accession>Q9W1G2</accession>
<accession>Q9W1G3</accession>
<proteinExistence type="evidence at protein level"/>
<feature type="chain" id="PRO_0000046208" description="Calcium-transporting ATPase sarcoplasmic/endoplasmic reticulum type">
    <location>
        <begin position="1"/>
        <end position="1020"/>
    </location>
</feature>
<feature type="topological domain" description="Cytoplasmic" evidence="1">
    <location>
        <begin position="1"/>
        <end position="48"/>
    </location>
</feature>
<feature type="transmembrane region" description="Helical; Name=1" evidence="1">
    <location>
        <begin position="49"/>
        <end position="69"/>
    </location>
</feature>
<feature type="topological domain" description="Lumenal" evidence="1">
    <location>
        <begin position="70"/>
        <end position="89"/>
    </location>
</feature>
<feature type="transmembrane region" description="Helical; Name=2" evidence="1">
    <location>
        <begin position="90"/>
        <end position="110"/>
    </location>
</feature>
<feature type="topological domain" description="Cytoplasmic" evidence="1">
    <location>
        <begin position="111"/>
        <end position="253"/>
    </location>
</feature>
<feature type="transmembrane region" description="Helical; Name=3" evidence="1">
    <location>
        <begin position="254"/>
        <end position="273"/>
    </location>
</feature>
<feature type="topological domain" description="Lumenal" evidence="1">
    <location>
        <begin position="274"/>
        <end position="295"/>
    </location>
</feature>
<feature type="transmembrane region" description="Helical; Name=4" evidence="1">
    <location>
        <begin position="296"/>
        <end position="313"/>
    </location>
</feature>
<feature type="topological domain" description="Cytoplasmic" evidence="1">
    <location>
        <begin position="314"/>
        <end position="757"/>
    </location>
</feature>
<feature type="transmembrane region" description="Helical; Name=5" evidence="1">
    <location>
        <begin position="758"/>
        <end position="777"/>
    </location>
</feature>
<feature type="topological domain" description="Lumenal" evidence="1">
    <location>
        <begin position="778"/>
        <end position="787"/>
    </location>
</feature>
<feature type="transmembrane region" description="Helical; Name=6" evidence="1">
    <location>
        <begin position="788"/>
        <end position="808"/>
    </location>
</feature>
<feature type="topological domain" description="Cytoplasmic" evidence="1">
    <location>
        <begin position="809"/>
        <end position="828"/>
    </location>
</feature>
<feature type="transmembrane region" description="Helical; Name=7" evidence="1">
    <location>
        <begin position="829"/>
        <end position="851"/>
    </location>
</feature>
<feature type="topological domain" description="Lumenal" evidence="1">
    <location>
        <begin position="852"/>
        <end position="897"/>
    </location>
</feature>
<feature type="transmembrane region" description="Helical; Name=8" evidence="1">
    <location>
        <begin position="898"/>
        <end position="917"/>
    </location>
</feature>
<feature type="topological domain" description="Cytoplasmic" evidence="1">
    <location>
        <begin position="918"/>
        <end position="930"/>
    </location>
</feature>
<feature type="transmembrane region" description="Helical; Name=9" evidence="1">
    <location>
        <begin position="931"/>
        <end position="949"/>
    </location>
</feature>
<feature type="topological domain" description="Lumenal" evidence="1">
    <location>
        <begin position="950"/>
        <end position="964"/>
    </location>
</feature>
<feature type="transmembrane region" description="Helical; Name=10" evidence="1">
    <location>
        <begin position="965"/>
        <end position="985"/>
    </location>
</feature>
<feature type="topological domain" description="Cytoplasmic" evidence="1">
    <location>
        <begin position="986"/>
        <end position="1020"/>
    </location>
</feature>
<feature type="active site" description="4-aspartylphosphate intermediate" evidence="1">
    <location>
        <position position="351"/>
    </location>
</feature>
<feature type="binding site" evidence="1">
    <location>
        <position position="304"/>
    </location>
    <ligand>
        <name>Ca(2+)</name>
        <dbReference type="ChEBI" id="CHEBI:29108"/>
        <label>2</label>
    </ligand>
</feature>
<feature type="binding site" evidence="1">
    <location>
        <position position="305"/>
    </location>
    <ligand>
        <name>Ca(2+)</name>
        <dbReference type="ChEBI" id="CHEBI:29108"/>
        <label>2</label>
    </ligand>
</feature>
<feature type="binding site" evidence="1">
    <location>
        <position position="307"/>
    </location>
    <ligand>
        <name>Ca(2+)</name>
        <dbReference type="ChEBI" id="CHEBI:29108"/>
        <label>2</label>
    </ligand>
</feature>
<feature type="binding site" evidence="1">
    <location>
        <position position="309"/>
    </location>
    <ligand>
        <name>Ca(2+)</name>
        <dbReference type="ChEBI" id="CHEBI:29108"/>
        <label>2</label>
    </ligand>
</feature>
<feature type="binding site" evidence="1">
    <location>
        <position position="703"/>
    </location>
    <ligand>
        <name>Mg(2+)</name>
        <dbReference type="ChEBI" id="CHEBI:18420"/>
    </ligand>
</feature>
<feature type="binding site" evidence="1">
    <location>
        <position position="707"/>
    </location>
    <ligand>
        <name>Mg(2+)</name>
        <dbReference type="ChEBI" id="CHEBI:18420"/>
    </ligand>
</feature>
<feature type="binding site" evidence="1">
    <location>
        <position position="768"/>
    </location>
    <ligand>
        <name>Ca(2+)</name>
        <dbReference type="ChEBI" id="CHEBI:29108"/>
        <label>1</label>
    </ligand>
</feature>
<feature type="binding site" evidence="1">
    <location>
        <position position="771"/>
    </location>
    <ligand>
        <name>Ca(2+)</name>
        <dbReference type="ChEBI" id="CHEBI:29108"/>
        <label>1</label>
    </ligand>
</feature>
<feature type="binding site" evidence="1">
    <location>
        <position position="796"/>
    </location>
    <ligand>
        <name>Ca(2+)</name>
        <dbReference type="ChEBI" id="CHEBI:29108"/>
        <label>2</label>
    </ligand>
</feature>
<feature type="binding site" evidence="1">
    <location>
        <position position="799"/>
    </location>
    <ligand>
        <name>Ca(2+)</name>
        <dbReference type="ChEBI" id="CHEBI:29108"/>
        <label>1</label>
    </ligand>
</feature>
<feature type="binding site" evidence="1">
    <location>
        <position position="800"/>
    </location>
    <ligand>
        <name>Ca(2+)</name>
        <dbReference type="ChEBI" id="CHEBI:29108"/>
        <label>1</label>
    </ligand>
</feature>
<feature type="binding site" evidence="1">
    <location>
        <position position="800"/>
    </location>
    <ligand>
        <name>Ca(2+)</name>
        <dbReference type="ChEBI" id="CHEBI:29108"/>
        <label>2</label>
    </ligand>
</feature>
<feature type="binding site" evidence="1">
    <location>
        <position position="908"/>
    </location>
    <ligand>
        <name>Ca(2+)</name>
        <dbReference type="ChEBI" id="CHEBI:29108"/>
        <label>1</label>
    </ligand>
</feature>
<feature type="modified residue" description="Phosphoserine" evidence="2">
    <location>
        <position position="240"/>
    </location>
</feature>
<feature type="splice variant" id="VSP_010297" description="In isoform A." evidence="4">
    <original>GESPIYKMHGIVLMWAVFFGLLYAMML</original>
    <variation>VPDVVVDRM</variation>
    <location>
        <begin position="994"/>
        <end position="1020"/>
    </location>
</feature>
<feature type="sequence conflict" description="In Ref. 4; AAL13694." evidence="5" ref="4">
    <original>K</original>
    <variation>R</variation>
    <location>
        <position position="158"/>
    </location>
</feature>
<feature type="sequence conflict" description="In Ref. 1; AAB00735." evidence="5" ref="1">
    <original>L</original>
    <variation>V</variation>
    <location>
        <position position="302"/>
    </location>
</feature>
<feature type="sequence conflict" description="In Ref. 5; CAA35505." evidence="5" ref="5">
    <original>T</original>
    <variation>L</variation>
    <location>
        <position position="357"/>
    </location>
</feature>
<feature type="sequence conflict" description="In Ref. 4; AAL13694." evidence="5" ref="4">
    <original>S</original>
    <variation>P</variation>
    <location>
        <position position="495"/>
    </location>
</feature>
<name>ATC1_DROME</name>
<dbReference type="EC" id="7.2.2.10"/>
<dbReference type="EMBL" id="M62892">
    <property type="protein sequence ID" value="AAB00735.1"/>
    <property type="molecule type" value="mRNA"/>
</dbReference>
<dbReference type="EMBL" id="AE013599">
    <property type="protein sequence ID" value="AAF47101.1"/>
    <property type="molecule type" value="Genomic_DNA"/>
</dbReference>
<dbReference type="EMBL" id="AE013599">
    <property type="protein sequence ID" value="AAF47102.1"/>
    <property type="molecule type" value="Genomic_DNA"/>
</dbReference>
<dbReference type="EMBL" id="AE013599">
    <property type="protein sequence ID" value="AAF47103.1"/>
    <property type="molecule type" value="Genomic_DNA"/>
</dbReference>
<dbReference type="EMBL" id="AE013599">
    <property type="protein sequence ID" value="AAM68278.1"/>
    <property type="molecule type" value="Genomic_DNA"/>
</dbReference>
<dbReference type="EMBL" id="AE013599">
    <property type="protein sequence ID" value="AAM68279.1"/>
    <property type="molecule type" value="Genomic_DNA"/>
</dbReference>
<dbReference type="EMBL" id="AE013599">
    <property type="protein sequence ID" value="AAM68280.1"/>
    <property type="molecule type" value="Genomic_DNA"/>
</dbReference>
<dbReference type="EMBL" id="AE013599">
    <property type="protein sequence ID" value="AAM68281.1"/>
    <property type="molecule type" value="Genomic_DNA"/>
</dbReference>
<dbReference type="EMBL" id="AY058465">
    <property type="protein sequence ID" value="AAL13694.1"/>
    <property type="molecule type" value="mRNA"/>
</dbReference>
<dbReference type="EMBL" id="X17472">
    <property type="protein sequence ID" value="CAA35505.1"/>
    <property type="molecule type" value="mRNA"/>
</dbReference>
<dbReference type="PIR" id="A36691">
    <property type="entry name" value="A36691"/>
</dbReference>
<dbReference type="RefSeq" id="NP_476832.1">
    <molecule id="P22700-2"/>
    <property type="nucleotide sequence ID" value="NM_057484.3"/>
</dbReference>
<dbReference type="RefSeq" id="NP_726381.1">
    <molecule id="P22700-1"/>
    <property type="nucleotide sequence ID" value="NM_166633.2"/>
</dbReference>
<dbReference type="RefSeq" id="NP_726382.1">
    <molecule id="P22700-1"/>
    <property type="nucleotide sequence ID" value="NM_166634.2"/>
</dbReference>
<dbReference type="RefSeq" id="NP_726383.1">
    <molecule id="P22700-1"/>
    <property type="nucleotide sequence ID" value="NM_166635.2"/>
</dbReference>
<dbReference type="RefSeq" id="NP_726384.1">
    <molecule id="P22700-1"/>
    <property type="nucleotide sequence ID" value="NM_166636.2"/>
</dbReference>
<dbReference type="RefSeq" id="NP_726385.1">
    <molecule id="P22700-1"/>
    <property type="nucleotide sequence ID" value="NM_166637.2"/>
</dbReference>
<dbReference type="RefSeq" id="NP_726386.1">
    <molecule id="P22700-1"/>
    <property type="nucleotide sequence ID" value="NM_166638.2"/>
</dbReference>
<dbReference type="RefSeq" id="NP_726387.1">
    <molecule id="P22700-1"/>
    <property type="nucleotide sequence ID" value="NM_166639.2"/>
</dbReference>
<dbReference type="SMR" id="P22700"/>
<dbReference type="BioGRID" id="72161">
    <property type="interactions" value="131"/>
</dbReference>
<dbReference type="DIP" id="DIP-20129N"/>
<dbReference type="FunCoup" id="P22700">
    <property type="interactions" value="1033"/>
</dbReference>
<dbReference type="IntAct" id="P22700">
    <property type="interactions" value="72"/>
</dbReference>
<dbReference type="STRING" id="7227.FBpp0072125"/>
<dbReference type="iPTMnet" id="P22700"/>
<dbReference type="PaxDb" id="7227-FBpp0072125"/>
<dbReference type="DNASU" id="49297"/>
<dbReference type="EnsemblMetazoa" id="FBtr0072211">
    <molecule id="P22700-1"/>
    <property type="protein sequence ID" value="FBpp0072120"/>
    <property type="gene ID" value="FBgn0263006"/>
</dbReference>
<dbReference type="EnsemblMetazoa" id="FBtr0072212">
    <molecule id="P22700-1"/>
    <property type="protein sequence ID" value="FBpp0072121"/>
    <property type="gene ID" value="FBgn0263006"/>
</dbReference>
<dbReference type="EnsemblMetazoa" id="FBtr0072213">
    <molecule id="P22700-1"/>
    <property type="protein sequence ID" value="FBpp0072122"/>
    <property type="gene ID" value="FBgn0263006"/>
</dbReference>
<dbReference type="EnsemblMetazoa" id="FBtr0072214">
    <molecule id="P22700-1"/>
    <property type="protein sequence ID" value="FBpp0072123"/>
    <property type="gene ID" value="FBgn0263006"/>
</dbReference>
<dbReference type="EnsemblMetazoa" id="FBtr0072215">
    <molecule id="P22700-2"/>
    <property type="protein sequence ID" value="FBpp0072124"/>
    <property type="gene ID" value="FBgn0263006"/>
</dbReference>
<dbReference type="EnsemblMetazoa" id="FBtr0072216">
    <molecule id="P22700-1"/>
    <property type="protein sequence ID" value="FBpp0072125"/>
    <property type="gene ID" value="FBgn0263006"/>
</dbReference>
<dbReference type="EnsemblMetazoa" id="FBtr0072217">
    <molecule id="P22700-1"/>
    <property type="protein sequence ID" value="FBpp0072126"/>
    <property type="gene ID" value="FBgn0263006"/>
</dbReference>
<dbReference type="EnsemblMetazoa" id="FBtr0072218">
    <molecule id="P22700-1"/>
    <property type="protein sequence ID" value="FBpp0072127"/>
    <property type="gene ID" value="FBgn0263006"/>
</dbReference>
<dbReference type="GeneID" id="49297"/>
<dbReference type="KEGG" id="dme:Dmel_CG3725"/>
<dbReference type="AGR" id="FB:FBgn0263006"/>
<dbReference type="CTD" id="49297"/>
<dbReference type="FlyBase" id="FBgn0263006">
    <property type="gene designation" value="SERCA"/>
</dbReference>
<dbReference type="VEuPathDB" id="VectorBase:FBgn0263006"/>
<dbReference type="eggNOG" id="KOG0202">
    <property type="taxonomic scope" value="Eukaryota"/>
</dbReference>
<dbReference type="GeneTree" id="ENSGT00940000155668"/>
<dbReference type="InParanoid" id="P22700"/>
<dbReference type="OMA" id="PLWNNMM"/>
<dbReference type="OrthoDB" id="3352408at2759"/>
<dbReference type="PhylomeDB" id="P22700"/>
<dbReference type="Reactome" id="R-DME-418359">
    <property type="pathway name" value="Reduction of cytosolic Ca++ levels"/>
</dbReference>
<dbReference type="Reactome" id="R-DME-5578775">
    <property type="pathway name" value="Ion homeostasis"/>
</dbReference>
<dbReference type="Reactome" id="R-DME-936837">
    <property type="pathway name" value="Ion transport by P-type ATPases"/>
</dbReference>
<dbReference type="SignaLink" id="P22700"/>
<dbReference type="BioGRID-ORCS" id="49297">
    <property type="hits" value="0 hits in 3 CRISPR screens"/>
</dbReference>
<dbReference type="GenomeRNAi" id="49297"/>
<dbReference type="PRO" id="PR:P22700"/>
<dbReference type="Proteomes" id="UP000000803">
    <property type="component" value="Chromosome 2R"/>
</dbReference>
<dbReference type="Bgee" id="FBgn0263006">
    <property type="expression patterns" value="Expressed in muscle cell in imaginal disc-derived wing and 282 other cell types or tissues"/>
</dbReference>
<dbReference type="ExpressionAtlas" id="P22700">
    <property type="expression patterns" value="baseline and differential"/>
</dbReference>
<dbReference type="GO" id="GO:0012505">
    <property type="term" value="C:endomembrane system"/>
    <property type="evidence" value="ECO:0007005"/>
    <property type="project" value="FlyBase"/>
</dbReference>
<dbReference type="GO" id="GO:0005783">
    <property type="term" value="C:endoplasmic reticulum"/>
    <property type="evidence" value="ECO:0000250"/>
    <property type="project" value="UniProtKB"/>
</dbReference>
<dbReference type="GO" id="GO:0005789">
    <property type="term" value="C:endoplasmic reticulum membrane"/>
    <property type="evidence" value="ECO:0000314"/>
    <property type="project" value="FlyBase"/>
</dbReference>
<dbReference type="GO" id="GO:0016020">
    <property type="term" value="C:membrane"/>
    <property type="evidence" value="ECO:0000318"/>
    <property type="project" value="GO_Central"/>
</dbReference>
<dbReference type="GO" id="GO:0016529">
    <property type="term" value="C:sarcoplasmic reticulum"/>
    <property type="evidence" value="ECO:0000314"/>
    <property type="project" value="FlyBase"/>
</dbReference>
<dbReference type="GO" id="GO:0033017">
    <property type="term" value="C:sarcoplasmic reticulum membrane"/>
    <property type="evidence" value="ECO:0007669"/>
    <property type="project" value="UniProtKB-SubCell"/>
</dbReference>
<dbReference type="GO" id="GO:0045202">
    <property type="term" value="C:synapse"/>
    <property type="evidence" value="ECO:0007669"/>
    <property type="project" value="GOC"/>
</dbReference>
<dbReference type="GO" id="GO:0005524">
    <property type="term" value="F:ATP binding"/>
    <property type="evidence" value="ECO:0007669"/>
    <property type="project" value="UniProtKB-KW"/>
</dbReference>
<dbReference type="GO" id="GO:0016887">
    <property type="term" value="F:ATP hydrolysis activity"/>
    <property type="evidence" value="ECO:0007669"/>
    <property type="project" value="InterPro"/>
</dbReference>
<dbReference type="GO" id="GO:0046872">
    <property type="term" value="F:metal ion binding"/>
    <property type="evidence" value="ECO:0007669"/>
    <property type="project" value="UniProtKB-KW"/>
</dbReference>
<dbReference type="GO" id="GO:0005388">
    <property type="term" value="F:P-type calcium transporter activity"/>
    <property type="evidence" value="ECO:0000314"/>
    <property type="project" value="FlyBase"/>
</dbReference>
<dbReference type="GO" id="GO:1990845">
    <property type="term" value="P:adaptive thermogenesis"/>
    <property type="evidence" value="ECO:0000315"/>
    <property type="project" value="FlyBase"/>
</dbReference>
<dbReference type="GO" id="GO:0070588">
    <property type="term" value="P:calcium ion transmembrane transport"/>
    <property type="evidence" value="ECO:0000318"/>
    <property type="project" value="GO_Central"/>
</dbReference>
<dbReference type="GO" id="GO:1903515">
    <property type="term" value="P:calcium ion transport from cytosol to endoplasmic reticulum"/>
    <property type="evidence" value="ECO:0000314"/>
    <property type="project" value="FlyBase"/>
</dbReference>
<dbReference type="GO" id="GO:0007629">
    <property type="term" value="P:flight behavior"/>
    <property type="evidence" value="ECO:0000316"/>
    <property type="project" value="FlyBase"/>
</dbReference>
<dbReference type="GO" id="GO:0030707">
    <property type="term" value="P:follicle cell of egg chamber development"/>
    <property type="evidence" value="ECO:0000315"/>
    <property type="project" value="FlyBase"/>
</dbReference>
<dbReference type="GO" id="GO:0060047">
    <property type="term" value="P:heart contraction"/>
    <property type="evidence" value="ECO:0000315"/>
    <property type="project" value="FlyBase"/>
</dbReference>
<dbReference type="GO" id="GO:0036335">
    <property type="term" value="P:intestinal stem cell homeostasis"/>
    <property type="evidence" value="ECO:0000315"/>
    <property type="project" value="FlyBase"/>
</dbReference>
<dbReference type="GO" id="GO:0006874">
    <property type="term" value="P:intracellular calcium ion homeostasis"/>
    <property type="evidence" value="ECO:0000315"/>
    <property type="project" value="FlyBase"/>
</dbReference>
<dbReference type="GO" id="GO:0007274">
    <property type="term" value="P:neuromuscular synaptic transmission"/>
    <property type="evidence" value="ECO:0000315"/>
    <property type="project" value="FlyBase"/>
</dbReference>
<dbReference type="GO" id="GO:0051282">
    <property type="term" value="P:regulation of sequestering of calcium ion"/>
    <property type="evidence" value="ECO:0000315"/>
    <property type="project" value="FlyBase"/>
</dbReference>
<dbReference type="GO" id="GO:0030322">
    <property type="term" value="P:stabilization of membrane potential"/>
    <property type="evidence" value="ECO:0000316"/>
    <property type="project" value="FlyBase"/>
</dbReference>
<dbReference type="GO" id="GO:0048863">
    <property type="term" value="P:stem cell differentiation"/>
    <property type="evidence" value="ECO:0000315"/>
    <property type="project" value="FlyBase"/>
</dbReference>
<dbReference type="CDD" id="cd02083">
    <property type="entry name" value="P-type_ATPase_SERCA"/>
    <property type="match status" value="1"/>
</dbReference>
<dbReference type="FunFam" id="2.70.150.10:FF:000143">
    <property type="entry name" value="Calcium-transporting ATPase"/>
    <property type="match status" value="1"/>
</dbReference>
<dbReference type="FunFam" id="3.40.1110.10:FF:000003">
    <property type="entry name" value="Calcium-transporting ATPase"/>
    <property type="match status" value="1"/>
</dbReference>
<dbReference type="FunFam" id="3.40.50.1000:FF:000005">
    <property type="entry name" value="Calcium-transporting ATPase 1"/>
    <property type="match status" value="1"/>
</dbReference>
<dbReference type="FunFam" id="1.20.1110.10:FF:000065">
    <property type="entry name" value="Sarcoplasmic/endoplasmic reticulum calcium ATPase 1"/>
    <property type="match status" value="3"/>
</dbReference>
<dbReference type="Gene3D" id="3.40.1110.10">
    <property type="entry name" value="Calcium-transporting ATPase, cytoplasmic domain N"/>
    <property type="match status" value="1"/>
</dbReference>
<dbReference type="Gene3D" id="2.70.150.10">
    <property type="entry name" value="Calcium-transporting ATPase, cytoplasmic transduction domain A"/>
    <property type="match status" value="1"/>
</dbReference>
<dbReference type="Gene3D" id="1.20.1110.10">
    <property type="entry name" value="Calcium-transporting ATPase, transmembrane domain"/>
    <property type="match status" value="1"/>
</dbReference>
<dbReference type="Gene3D" id="3.40.50.1000">
    <property type="entry name" value="HAD superfamily/HAD-like"/>
    <property type="match status" value="1"/>
</dbReference>
<dbReference type="InterPro" id="IPR006068">
    <property type="entry name" value="ATPase_P-typ_cation-transptr_C"/>
</dbReference>
<dbReference type="InterPro" id="IPR004014">
    <property type="entry name" value="ATPase_P-typ_cation-transptr_N"/>
</dbReference>
<dbReference type="InterPro" id="IPR023299">
    <property type="entry name" value="ATPase_P-typ_cyto_dom_N"/>
</dbReference>
<dbReference type="InterPro" id="IPR018303">
    <property type="entry name" value="ATPase_P-typ_P_site"/>
</dbReference>
<dbReference type="InterPro" id="IPR023298">
    <property type="entry name" value="ATPase_P-typ_TM_dom_sf"/>
</dbReference>
<dbReference type="InterPro" id="IPR008250">
    <property type="entry name" value="ATPase_P-typ_transduc_dom_A_sf"/>
</dbReference>
<dbReference type="InterPro" id="IPR036412">
    <property type="entry name" value="HAD-like_sf"/>
</dbReference>
<dbReference type="InterPro" id="IPR023214">
    <property type="entry name" value="HAD_sf"/>
</dbReference>
<dbReference type="InterPro" id="IPR005782">
    <property type="entry name" value="P-type_ATPase_IIA"/>
</dbReference>
<dbReference type="InterPro" id="IPR001757">
    <property type="entry name" value="P_typ_ATPase"/>
</dbReference>
<dbReference type="InterPro" id="IPR044492">
    <property type="entry name" value="P_typ_ATPase_HD_dom"/>
</dbReference>
<dbReference type="NCBIfam" id="TIGR01116">
    <property type="entry name" value="ATPase-IIA1_Ca"/>
    <property type="match status" value="1"/>
</dbReference>
<dbReference type="NCBIfam" id="TIGR01494">
    <property type="entry name" value="ATPase_P-type"/>
    <property type="match status" value="3"/>
</dbReference>
<dbReference type="PANTHER" id="PTHR42861">
    <property type="entry name" value="CALCIUM-TRANSPORTING ATPASE"/>
    <property type="match status" value="1"/>
</dbReference>
<dbReference type="Pfam" id="PF13246">
    <property type="entry name" value="Cation_ATPase"/>
    <property type="match status" value="1"/>
</dbReference>
<dbReference type="Pfam" id="PF00689">
    <property type="entry name" value="Cation_ATPase_C"/>
    <property type="match status" value="1"/>
</dbReference>
<dbReference type="Pfam" id="PF00690">
    <property type="entry name" value="Cation_ATPase_N"/>
    <property type="match status" value="1"/>
</dbReference>
<dbReference type="Pfam" id="PF00122">
    <property type="entry name" value="E1-E2_ATPase"/>
    <property type="match status" value="1"/>
</dbReference>
<dbReference type="Pfam" id="PF00702">
    <property type="entry name" value="Hydrolase"/>
    <property type="match status" value="1"/>
</dbReference>
<dbReference type="PRINTS" id="PR00119">
    <property type="entry name" value="CATATPASE"/>
</dbReference>
<dbReference type="SFLD" id="SFLDS00003">
    <property type="entry name" value="Haloacid_Dehalogenase"/>
    <property type="match status" value="1"/>
</dbReference>
<dbReference type="SFLD" id="SFLDF00027">
    <property type="entry name" value="p-type_atpase"/>
    <property type="match status" value="1"/>
</dbReference>
<dbReference type="SMART" id="SM00831">
    <property type="entry name" value="Cation_ATPase_N"/>
    <property type="match status" value="1"/>
</dbReference>
<dbReference type="SUPFAM" id="SSF81653">
    <property type="entry name" value="Calcium ATPase, transduction domain A"/>
    <property type="match status" value="1"/>
</dbReference>
<dbReference type="SUPFAM" id="SSF81665">
    <property type="entry name" value="Calcium ATPase, transmembrane domain M"/>
    <property type="match status" value="1"/>
</dbReference>
<dbReference type="SUPFAM" id="SSF56784">
    <property type="entry name" value="HAD-like"/>
    <property type="match status" value="1"/>
</dbReference>
<dbReference type="SUPFAM" id="SSF81660">
    <property type="entry name" value="Metal cation-transporting ATPase, ATP-binding domain N"/>
    <property type="match status" value="1"/>
</dbReference>
<dbReference type="PROSITE" id="PS00154">
    <property type="entry name" value="ATPASE_E1_E2"/>
    <property type="match status" value="1"/>
</dbReference>
<reference key="1">
    <citation type="journal article" date="1990" name="Biochem. Biophys. Res. Commun.">
        <title>Molecular cloning and chromosomal localization of a sarco/endoplasmic reticulum-type Ca2(+)-ATPase of Drosophila melanogaster.</title>
        <authorList>
            <person name="Magyar A."/>
            <person name="Varadi A."/>
        </authorList>
    </citation>
    <scope>NUCLEOTIDE SEQUENCE [MRNA] (ISOFORM A)</scope>
</reference>
<reference key="2">
    <citation type="journal article" date="2000" name="Science">
        <title>The genome sequence of Drosophila melanogaster.</title>
        <authorList>
            <person name="Adams M.D."/>
            <person name="Celniker S.E."/>
            <person name="Holt R.A."/>
            <person name="Evans C.A."/>
            <person name="Gocayne J.D."/>
            <person name="Amanatides P.G."/>
            <person name="Scherer S.E."/>
            <person name="Li P.W."/>
            <person name="Hoskins R.A."/>
            <person name="Galle R.F."/>
            <person name="George R.A."/>
            <person name="Lewis S.E."/>
            <person name="Richards S."/>
            <person name="Ashburner M."/>
            <person name="Henderson S.N."/>
            <person name="Sutton G.G."/>
            <person name="Wortman J.R."/>
            <person name="Yandell M.D."/>
            <person name="Zhang Q."/>
            <person name="Chen L.X."/>
            <person name="Brandon R.C."/>
            <person name="Rogers Y.-H.C."/>
            <person name="Blazej R.G."/>
            <person name="Champe M."/>
            <person name="Pfeiffer B.D."/>
            <person name="Wan K.H."/>
            <person name="Doyle C."/>
            <person name="Baxter E.G."/>
            <person name="Helt G."/>
            <person name="Nelson C.R."/>
            <person name="Miklos G.L.G."/>
            <person name="Abril J.F."/>
            <person name="Agbayani A."/>
            <person name="An H.-J."/>
            <person name="Andrews-Pfannkoch C."/>
            <person name="Baldwin D."/>
            <person name="Ballew R.M."/>
            <person name="Basu A."/>
            <person name="Baxendale J."/>
            <person name="Bayraktaroglu L."/>
            <person name="Beasley E.M."/>
            <person name="Beeson K.Y."/>
            <person name="Benos P.V."/>
            <person name="Berman B.P."/>
            <person name="Bhandari D."/>
            <person name="Bolshakov S."/>
            <person name="Borkova D."/>
            <person name="Botchan M.R."/>
            <person name="Bouck J."/>
            <person name="Brokstein P."/>
            <person name="Brottier P."/>
            <person name="Burtis K.C."/>
            <person name="Busam D.A."/>
            <person name="Butler H."/>
            <person name="Cadieu E."/>
            <person name="Center A."/>
            <person name="Chandra I."/>
            <person name="Cherry J.M."/>
            <person name="Cawley S."/>
            <person name="Dahlke C."/>
            <person name="Davenport L.B."/>
            <person name="Davies P."/>
            <person name="de Pablos B."/>
            <person name="Delcher A."/>
            <person name="Deng Z."/>
            <person name="Mays A.D."/>
            <person name="Dew I."/>
            <person name="Dietz S.M."/>
            <person name="Dodson K."/>
            <person name="Doup L.E."/>
            <person name="Downes M."/>
            <person name="Dugan-Rocha S."/>
            <person name="Dunkov B.C."/>
            <person name="Dunn P."/>
            <person name="Durbin K.J."/>
            <person name="Evangelista C.C."/>
            <person name="Ferraz C."/>
            <person name="Ferriera S."/>
            <person name="Fleischmann W."/>
            <person name="Fosler C."/>
            <person name="Gabrielian A.E."/>
            <person name="Garg N.S."/>
            <person name="Gelbart W.M."/>
            <person name="Glasser K."/>
            <person name="Glodek A."/>
            <person name="Gong F."/>
            <person name="Gorrell J.H."/>
            <person name="Gu Z."/>
            <person name="Guan P."/>
            <person name="Harris M."/>
            <person name="Harris N.L."/>
            <person name="Harvey D.A."/>
            <person name="Heiman T.J."/>
            <person name="Hernandez J.R."/>
            <person name="Houck J."/>
            <person name="Hostin D."/>
            <person name="Houston K.A."/>
            <person name="Howland T.J."/>
            <person name="Wei M.-H."/>
            <person name="Ibegwam C."/>
            <person name="Jalali M."/>
            <person name="Kalush F."/>
            <person name="Karpen G.H."/>
            <person name="Ke Z."/>
            <person name="Kennison J.A."/>
            <person name="Ketchum K.A."/>
            <person name="Kimmel B.E."/>
            <person name="Kodira C.D."/>
            <person name="Kraft C.L."/>
            <person name="Kravitz S."/>
            <person name="Kulp D."/>
            <person name="Lai Z."/>
            <person name="Lasko P."/>
            <person name="Lei Y."/>
            <person name="Levitsky A.A."/>
            <person name="Li J.H."/>
            <person name="Li Z."/>
            <person name="Liang Y."/>
            <person name="Lin X."/>
            <person name="Liu X."/>
            <person name="Mattei B."/>
            <person name="McIntosh T.C."/>
            <person name="McLeod M.P."/>
            <person name="McPherson D."/>
            <person name="Merkulov G."/>
            <person name="Milshina N.V."/>
            <person name="Mobarry C."/>
            <person name="Morris J."/>
            <person name="Moshrefi A."/>
            <person name="Mount S.M."/>
            <person name="Moy M."/>
            <person name="Murphy B."/>
            <person name="Murphy L."/>
            <person name="Muzny D.M."/>
            <person name="Nelson D.L."/>
            <person name="Nelson D.R."/>
            <person name="Nelson K.A."/>
            <person name="Nixon K."/>
            <person name="Nusskern D.R."/>
            <person name="Pacleb J.M."/>
            <person name="Palazzolo M."/>
            <person name="Pittman G.S."/>
            <person name="Pan S."/>
            <person name="Pollard J."/>
            <person name="Puri V."/>
            <person name="Reese M.G."/>
            <person name="Reinert K."/>
            <person name="Remington K."/>
            <person name="Saunders R.D.C."/>
            <person name="Scheeler F."/>
            <person name="Shen H."/>
            <person name="Shue B.C."/>
            <person name="Siden-Kiamos I."/>
            <person name="Simpson M."/>
            <person name="Skupski M.P."/>
            <person name="Smith T.J."/>
            <person name="Spier E."/>
            <person name="Spradling A.C."/>
            <person name="Stapleton M."/>
            <person name="Strong R."/>
            <person name="Sun E."/>
            <person name="Svirskas R."/>
            <person name="Tector C."/>
            <person name="Turner R."/>
            <person name="Venter E."/>
            <person name="Wang A.H."/>
            <person name="Wang X."/>
            <person name="Wang Z.-Y."/>
            <person name="Wassarman D.A."/>
            <person name="Weinstock G.M."/>
            <person name="Weissenbach J."/>
            <person name="Williams S.M."/>
            <person name="Woodage T."/>
            <person name="Worley K.C."/>
            <person name="Wu D."/>
            <person name="Yang S."/>
            <person name="Yao Q.A."/>
            <person name="Ye J."/>
            <person name="Yeh R.-F."/>
            <person name="Zaveri J.S."/>
            <person name="Zhan M."/>
            <person name="Zhang G."/>
            <person name="Zhao Q."/>
            <person name="Zheng L."/>
            <person name="Zheng X.H."/>
            <person name="Zhong F.N."/>
            <person name="Zhong W."/>
            <person name="Zhou X."/>
            <person name="Zhu S.C."/>
            <person name="Zhu X."/>
            <person name="Smith H.O."/>
            <person name="Gibbs R.A."/>
            <person name="Myers E.W."/>
            <person name="Rubin G.M."/>
            <person name="Venter J.C."/>
        </authorList>
    </citation>
    <scope>NUCLEOTIDE SEQUENCE [LARGE SCALE GENOMIC DNA]</scope>
    <source>
        <strain>Berkeley</strain>
    </source>
</reference>
<reference key="3">
    <citation type="journal article" date="2002" name="Genome Biol.">
        <title>Annotation of the Drosophila melanogaster euchromatic genome: a systematic review.</title>
        <authorList>
            <person name="Misra S."/>
            <person name="Crosby M.A."/>
            <person name="Mungall C.J."/>
            <person name="Matthews B.B."/>
            <person name="Campbell K.S."/>
            <person name="Hradecky P."/>
            <person name="Huang Y."/>
            <person name="Kaminker J.S."/>
            <person name="Millburn G.H."/>
            <person name="Prochnik S.E."/>
            <person name="Smith C.D."/>
            <person name="Tupy J.L."/>
            <person name="Whitfield E.J."/>
            <person name="Bayraktaroglu L."/>
            <person name="Berman B.P."/>
            <person name="Bettencourt B.R."/>
            <person name="Celniker S.E."/>
            <person name="de Grey A.D.N.J."/>
            <person name="Drysdale R.A."/>
            <person name="Harris N.L."/>
            <person name="Richter J."/>
            <person name="Russo S."/>
            <person name="Schroeder A.J."/>
            <person name="Shu S.Q."/>
            <person name="Stapleton M."/>
            <person name="Yamada C."/>
            <person name="Ashburner M."/>
            <person name="Gelbart W.M."/>
            <person name="Rubin G.M."/>
            <person name="Lewis S.E."/>
        </authorList>
    </citation>
    <scope>GENOME REANNOTATION</scope>
    <scope>ALTERNATIVE SPLICING</scope>
    <source>
        <strain>Berkeley</strain>
    </source>
</reference>
<reference key="4">
    <citation type="journal article" date="2002" name="Genome Biol.">
        <title>A Drosophila full-length cDNA resource.</title>
        <authorList>
            <person name="Stapleton M."/>
            <person name="Carlson J.W."/>
            <person name="Brokstein P."/>
            <person name="Yu C."/>
            <person name="Champe M."/>
            <person name="George R.A."/>
            <person name="Guarin H."/>
            <person name="Kronmiller B."/>
            <person name="Pacleb J.M."/>
            <person name="Park S."/>
            <person name="Wan K.H."/>
            <person name="Rubin G.M."/>
            <person name="Celniker S.E."/>
        </authorList>
    </citation>
    <scope>NUCLEOTIDE SEQUENCE [LARGE SCALE MRNA] (ISOFORM B)</scope>
    <source>
        <strain>Berkeley</strain>
        <tissue>Head</tissue>
    </source>
</reference>
<reference key="5">
    <citation type="journal article" date="1989" name="FEBS Lett.">
        <title>Amplification of the phosphorylation site-ATP-binding site cDNA fragment of the Na+,K(+)-ATPase and the Ca2(+)-ATPase of Drosophila melanogaster by polymerase chain reaction.</title>
        <authorList>
            <person name="Varadi A."/>
            <person name="Gilmore-Heber M."/>
            <person name="Benz E.J. Jr."/>
        </authorList>
    </citation>
    <scope>NUCLEOTIDE SEQUENCE [MRNA] OF 357-513</scope>
</reference>
<reference key="6">
    <citation type="journal article" date="2008" name="J. Proteome Res.">
        <title>Phosphoproteome analysis of Drosophila melanogaster embryos.</title>
        <authorList>
            <person name="Zhai B."/>
            <person name="Villen J."/>
            <person name="Beausoleil S.A."/>
            <person name="Mintseris J."/>
            <person name="Gygi S.P."/>
        </authorList>
    </citation>
    <scope>PHOSPHORYLATION [LARGE SCALE ANALYSIS] AT SER-240</scope>
    <scope>IDENTIFICATION BY MASS SPECTROMETRY</scope>
    <source>
        <tissue>Embryo</tissue>
    </source>
</reference>
<reference key="7">
    <citation type="journal article" date="2013" name="Science">
        <title>Conserved regulation of cardiac calcium uptake by peptides encoded in small open reading frames.</title>
        <authorList>
            <person name="Magny E.G."/>
            <person name="Pueyo J.I."/>
            <person name="Pearl F.M."/>
            <person name="Cespedes M.A."/>
            <person name="Niven J.E."/>
            <person name="Bishop S.A."/>
            <person name="Couso J.P."/>
        </authorList>
    </citation>
    <scope>INTERACTION WITH SCLA AND SCLB</scope>
    <scope>SUBCELLULAR LOCATION</scope>
</reference>
<comment type="function">
    <text>This magnesium-dependent enzyme catalyzes the hydrolysis of ATP coupled with the transport of calcium.</text>
</comment>
<comment type="catalytic activity">
    <reaction>
        <text>Ca(2+)(in) + ATP + H2O = Ca(2+)(out) + ADP + phosphate + H(+)</text>
        <dbReference type="Rhea" id="RHEA:18105"/>
        <dbReference type="ChEBI" id="CHEBI:15377"/>
        <dbReference type="ChEBI" id="CHEBI:15378"/>
        <dbReference type="ChEBI" id="CHEBI:29108"/>
        <dbReference type="ChEBI" id="CHEBI:30616"/>
        <dbReference type="ChEBI" id="CHEBI:43474"/>
        <dbReference type="ChEBI" id="CHEBI:456216"/>
        <dbReference type="EC" id="7.2.2.10"/>
    </reaction>
</comment>
<comment type="subunit">
    <text evidence="3">Interacts with SclA and SclB.</text>
</comment>
<comment type="subcellular location">
    <subcellularLocation>
        <location evidence="3">Endoplasmic reticulum membrane</location>
        <topology evidence="3">Multi-pass membrane protein</topology>
    </subcellularLocation>
    <subcellularLocation>
        <location evidence="3">Sarcoplasmic reticulum membrane</location>
        <topology evidence="3">Multi-pass membrane protein</topology>
    </subcellularLocation>
    <text evidence="3">Colocalizes with SclA and SclB at the sarcoplasmic reticulum and the diad, a structure composed of a single t-tubule paired with a terminal cisterna of the sarcoplasmic reticulum.</text>
</comment>
<comment type="alternative products">
    <event type="alternative splicing"/>
    <isoform>
        <id>P22700-1</id>
        <name>B</name>
        <name>C</name>
        <name>D</name>
        <name>E</name>
        <name>F</name>
        <name>G</name>
        <name>H</name>
        <sequence type="displayed"/>
    </isoform>
    <isoform>
        <id>P22700-2</id>
        <name>A</name>
        <sequence type="described" ref="VSP_010297"/>
    </isoform>
</comment>
<comment type="similarity">
    <text evidence="5">Belongs to the cation transport ATPase (P-type) (TC 3.A.3) family.</text>
</comment>
<gene>
    <name evidence="6" type="primary">SERCA</name>
    <name evidence="6" type="synonym">Ca-P60A</name>
    <name evidence="6" type="ORF">CG3725</name>
</gene>
<sequence>MEDGHSKTVEQSLNFFGTDPERGLTLDQIKANQKKYGPNELPTEEGKSIWQLVLEQFDDLLVKILLLAAIISFVLALFEEHEETFTAFVEPLVILLILIANAVVGVWQERNAESAIEALKEYEPEMGKVVRQDKSGIQKVRAKEIVPGDLVEVSVGDKIPADIRITHIYSTTLRIDQSILTGESVSVIKHTDAIPDPRAVNQDKKNILFSGTNVAAGKARGVVIGTGLSTAIGKIRTEMSETEEIKTPLQQKLDEFGEQLSKVISVICVAVWAINIGHFNDPAHGGSWIKGAIYYFKIAVALAVAAIPEGLPAVITTCLALGTRRMAKKNAIVRSLPSVETLGCTSVICSDKTGTLTTNQMSVSRMFIFDKVEGNDSSFLEFEMTGSTYEPIGEVFLNGQRIKAADYDTLQELSTICIMCNDSAIDYNEFKQAFEKVGEATETALIVLAEKLNSFSVNKSGLDRRSAAIACRGEIETKWKKEFTLEFSRDRKSMSSYCTPLKASRLGTGPKLFVKGAPEGVLERCTHARVGTTKVPLTSALKAKILALTGQYGTGRDTLRCLALAVADSPMKPDEMDLGDSTKFYQYEVNLTFVGVVGMLDPPRKEVFDSIVRCRAAGIRVIVITGDNKATAEAICRRIGVFAEDEDTTGKSYSGREFDDLSPTEQKAAVARSRLFSRVEPQHKSKIVEFLQSMNEISAMTGDGVNDAPALKKAEIGIAMGSGTAVAKSAAEMVLADDNFSSIVSAVEEGRAIYNNMKQFIRYLISSNIGEVVSIFLTAALGLPEALIPVQLLWVNLVTDGLPATALGFNPPDLDIMEKPPRKADEGLISGWLFFRYMAIGFYVGAATVGAAAWWFVFSDEGPKLSYWQLTHHLSCLGGGDEFKGVDCKIFSDPHAMTMALSVLVTIEMLNAMNSLSENQSLITMPPWCNLWLIGSMALSFTLHFVILYVDVLSTVFQVTPLSAEEWITVMKFSIPVVLLDETLKFVARKIADGESPIYKMHGIVLMWAVFFGLLYAMML</sequence>